<comment type="function">
    <text evidence="1">Repressor involved in the biosynthesis of the osmoprotectant glycine betaine. It represses transcription of the choline transporter BetT and the genes of BetAB involved in the synthesis of glycine betaine (By similarity).</text>
</comment>
<comment type="pathway">
    <text>Amine and polyamine biosynthesis; betaine biosynthesis via choline pathway [regulation].</text>
</comment>
<gene>
    <name evidence="2" type="primary">betI</name>
    <name type="ordered locus">EcE24377A_0328</name>
</gene>
<name>BETI_ECO24</name>
<proteinExistence type="inferred from homology"/>
<protein>
    <recommendedName>
        <fullName evidence="2">HTH-type transcriptional regulator BetI</fullName>
    </recommendedName>
</protein>
<dbReference type="EMBL" id="CP000800">
    <property type="protein sequence ID" value="ABV17388.1"/>
    <property type="molecule type" value="Genomic_DNA"/>
</dbReference>
<dbReference type="RefSeq" id="WP_001295527.1">
    <property type="nucleotide sequence ID" value="NC_009801.1"/>
</dbReference>
<dbReference type="SMR" id="A7ZI52"/>
<dbReference type="GeneID" id="75206485"/>
<dbReference type="KEGG" id="ecw:EcE24377A_0328"/>
<dbReference type="HOGENOM" id="CLU_069356_15_4_6"/>
<dbReference type="UniPathway" id="UPA00529"/>
<dbReference type="Proteomes" id="UP000001122">
    <property type="component" value="Chromosome"/>
</dbReference>
<dbReference type="GO" id="GO:0003700">
    <property type="term" value="F:DNA-binding transcription factor activity"/>
    <property type="evidence" value="ECO:0007669"/>
    <property type="project" value="UniProtKB-UniRule"/>
</dbReference>
<dbReference type="GO" id="GO:0000976">
    <property type="term" value="F:transcription cis-regulatory region binding"/>
    <property type="evidence" value="ECO:0007669"/>
    <property type="project" value="TreeGrafter"/>
</dbReference>
<dbReference type="GO" id="GO:0019285">
    <property type="term" value="P:glycine betaine biosynthetic process from choline"/>
    <property type="evidence" value="ECO:0007669"/>
    <property type="project" value="UniProtKB-UniRule"/>
</dbReference>
<dbReference type="GO" id="GO:0045892">
    <property type="term" value="P:negative regulation of DNA-templated transcription"/>
    <property type="evidence" value="ECO:0007669"/>
    <property type="project" value="UniProtKB-UniRule"/>
</dbReference>
<dbReference type="FunFam" id="1.10.357.10:FF:000009">
    <property type="entry name" value="HTH-type transcriptional regulator BetI"/>
    <property type="match status" value="1"/>
</dbReference>
<dbReference type="Gene3D" id="1.10.357.10">
    <property type="entry name" value="Tetracycline Repressor, domain 2"/>
    <property type="match status" value="1"/>
</dbReference>
<dbReference type="HAMAP" id="MF_00768">
    <property type="entry name" value="HTH_type_BetI"/>
    <property type="match status" value="1"/>
</dbReference>
<dbReference type="InterPro" id="IPR039538">
    <property type="entry name" value="BetI_C"/>
</dbReference>
<dbReference type="InterPro" id="IPR023772">
    <property type="entry name" value="DNA-bd_HTH_TetR-type_CS"/>
</dbReference>
<dbReference type="InterPro" id="IPR009057">
    <property type="entry name" value="Homeodomain-like_sf"/>
</dbReference>
<dbReference type="InterPro" id="IPR050109">
    <property type="entry name" value="HTH-type_TetR-like_transc_reg"/>
</dbReference>
<dbReference type="InterPro" id="IPR001647">
    <property type="entry name" value="HTH_TetR"/>
</dbReference>
<dbReference type="InterPro" id="IPR036271">
    <property type="entry name" value="Tet_transcr_reg_TetR-rel_C_sf"/>
</dbReference>
<dbReference type="InterPro" id="IPR017757">
    <property type="entry name" value="Tscrpt_rep_BetI"/>
</dbReference>
<dbReference type="NCBIfam" id="TIGR03384">
    <property type="entry name" value="betaine_BetI"/>
    <property type="match status" value="1"/>
</dbReference>
<dbReference type="NCBIfam" id="NF001978">
    <property type="entry name" value="PRK00767.1"/>
    <property type="match status" value="1"/>
</dbReference>
<dbReference type="PANTHER" id="PTHR30055:SF234">
    <property type="entry name" value="HTH-TYPE TRANSCRIPTIONAL REGULATOR BETI"/>
    <property type="match status" value="1"/>
</dbReference>
<dbReference type="PANTHER" id="PTHR30055">
    <property type="entry name" value="HTH-TYPE TRANSCRIPTIONAL REGULATOR RUTR"/>
    <property type="match status" value="1"/>
</dbReference>
<dbReference type="Pfam" id="PF13977">
    <property type="entry name" value="TetR_C_6"/>
    <property type="match status" value="1"/>
</dbReference>
<dbReference type="Pfam" id="PF00440">
    <property type="entry name" value="TetR_N"/>
    <property type="match status" value="1"/>
</dbReference>
<dbReference type="PRINTS" id="PR00455">
    <property type="entry name" value="HTHTETR"/>
</dbReference>
<dbReference type="SUPFAM" id="SSF46689">
    <property type="entry name" value="Homeodomain-like"/>
    <property type="match status" value="1"/>
</dbReference>
<dbReference type="SUPFAM" id="SSF48498">
    <property type="entry name" value="Tetracyclin repressor-like, C-terminal domain"/>
    <property type="match status" value="1"/>
</dbReference>
<dbReference type="PROSITE" id="PS01081">
    <property type="entry name" value="HTH_TETR_1"/>
    <property type="match status" value="1"/>
</dbReference>
<dbReference type="PROSITE" id="PS50977">
    <property type="entry name" value="HTH_TETR_2"/>
    <property type="match status" value="1"/>
</dbReference>
<feature type="chain" id="PRO_1000083560" description="HTH-type transcriptional regulator BetI">
    <location>
        <begin position="1"/>
        <end position="195"/>
    </location>
</feature>
<feature type="domain" description="HTH tetR-type" evidence="2">
    <location>
        <begin position="8"/>
        <end position="68"/>
    </location>
</feature>
<feature type="DNA-binding region" description="H-T-H motif" evidence="2">
    <location>
        <begin position="31"/>
        <end position="50"/>
    </location>
</feature>
<accession>A7ZI52</accession>
<sequence>MPKLGMQSIRRRQLIDATLEAINEVGMHDATIAQIARRAGVSTGIISHYFRDKNGLLEATMRDITSQLRDAVLNRLHALPQGSAEQRLQAIVGGNFDETQVSSAAMKAWLAFWASSMHQPMLYRLQQVSSRRLLSNLVSEFRRELPRQQAQEAGYGLAALIDGLWLRAALSGKPLDKPLAHSLTRHFITQHLPTD</sequence>
<reference key="1">
    <citation type="journal article" date="2008" name="J. Bacteriol.">
        <title>The pangenome structure of Escherichia coli: comparative genomic analysis of E. coli commensal and pathogenic isolates.</title>
        <authorList>
            <person name="Rasko D.A."/>
            <person name="Rosovitz M.J."/>
            <person name="Myers G.S.A."/>
            <person name="Mongodin E.F."/>
            <person name="Fricke W.F."/>
            <person name="Gajer P."/>
            <person name="Crabtree J."/>
            <person name="Sebaihia M."/>
            <person name="Thomson N.R."/>
            <person name="Chaudhuri R."/>
            <person name="Henderson I.R."/>
            <person name="Sperandio V."/>
            <person name="Ravel J."/>
        </authorList>
    </citation>
    <scope>NUCLEOTIDE SEQUENCE [LARGE SCALE GENOMIC DNA]</scope>
    <source>
        <strain>E24377A / ETEC</strain>
    </source>
</reference>
<organism>
    <name type="scientific">Escherichia coli O139:H28 (strain E24377A / ETEC)</name>
    <dbReference type="NCBI Taxonomy" id="331111"/>
    <lineage>
        <taxon>Bacteria</taxon>
        <taxon>Pseudomonadati</taxon>
        <taxon>Pseudomonadota</taxon>
        <taxon>Gammaproteobacteria</taxon>
        <taxon>Enterobacterales</taxon>
        <taxon>Enterobacteriaceae</taxon>
        <taxon>Escherichia</taxon>
    </lineage>
</organism>
<evidence type="ECO:0000250" key="1"/>
<evidence type="ECO:0000255" key="2">
    <source>
        <dbReference type="HAMAP-Rule" id="MF_00768"/>
    </source>
</evidence>
<keyword id="KW-0238">DNA-binding</keyword>
<keyword id="KW-1185">Reference proteome</keyword>
<keyword id="KW-0678">Repressor</keyword>
<keyword id="KW-0804">Transcription</keyword>
<keyword id="KW-0805">Transcription regulation</keyword>